<reference key="1">
    <citation type="submission" date="2002-12" db="EMBL/GenBank/DDBJ databases">
        <title>Complete genome sequence of Vibrio vulnificus CMCP6.</title>
        <authorList>
            <person name="Rhee J.H."/>
            <person name="Kim S.Y."/>
            <person name="Chung S.S."/>
            <person name="Kim J.J."/>
            <person name="Moon Y.H."/>
            <person name="Jeong H."/>
            <person name="Choy H.E."/>
        </authorList>
    </citation>
    <scope>NUCLEOTIDE SEQUENCE [LARGE SCALE GENOMIC DNA]</scope>
    <source>
        <strain>CMCP6</strain>
    </source>
</reference>
<comment type="function">
    <text evidence="1">GTPase that plays an essential role in the late steps of ribosome biogenesis.</text>
</comment>
<comment type="subunit">
    <text evidence="1">Associates with the 50S ribosomal subunit.</text>
</comment>
<comment type="similarity">
    <text evidence="1">Belongs to the TRAFAC class TrmE-Era-EngA-EngB-Septin-like GTPase superfamily. EngA (Der) GTPase family.</text>
</comment>
<name>DER_VIBVU</name>
<feature type="chain" id="PRO_0000179070" description="GTPase Der">
    <location>
        <begin position="1"/>
        <end position="496"/>
    </location>
</feature>
<feature type="domain" description="EngA-type G 1">
    <location>
        <begin position="3"/>
        <end position="166"/>
    </location>
</feature>
<feature type="domain" description="EngA-type G 2">
    <location>
        <begin position="208"/>
        <end position="381"/>
    </location>
</feature>
<feature type="domain" description="KH-like" evidence="1">
    <location>
        <begin position="382"/>
        <end position="466"/>
    </location>
</feature>
<feature type="binding site" evidence="1">
    <location>
        <begin position="9"/>
        <end position="16"/>
    </location>
    <ligand>
        <name>GTP</name>
        <dbReference type="ChEBI" id="CHEBI:37565"/>
        <label>1</label>
    </ligand>
</feature>
<feature type="binding site" evidence="1">
    <location>
        <begin position="56"/>
        <end position="60"/>
    </location>
    <ligand>
        <name>GTP</name>
        <dbReference type="ChEBI" id="CHEBI:37565"/>
        <label>1</label>
    </ligand>
</feature>
<feature type="binding site" evidence="1">
    <location>
        <begin position="118"/>
        <end position="121"/>
    </location>
    <ligand>
        <name>GTP</name>
        <dbReference type="ChEBI" id="CHEBI:37565"/>
        <label>1</label>
    </ligand>
</feature>
<feature type="binding site" evidence="1">
    <location>
        <begin position="214"/>
        <end position="221"/>
    </location>
    <ligand>
        <name>GTP</name>
        <dbReference type="ChEBI" id="CHEBI:37565"/>
        <label>2</label>
    </ligand>
</feature>
<feature type="binding site" evidence="1">
    <location>
        <begin position="261"/>
        <end position="265"/>
    </location>
    <ligand>
        <name>GTP</name>
        <dbReference type="ChEBI" id="CHEBI:37565"/>
        <label>2</label>
    </ligand>
</feature>
<feature type="binding site" evidence="1">
    <location>
        <begin position="326"/>
        <end position="329"/>
    </location>
    <ligand>
        <name>GTP</name>
        <dbReference type="ChEBI" id="CHEBI:37565"/>
        <label>2</label>
    </ligand>
</feature>
<organism>
    <name type="scientific">Vibrio vulnificus (strain CMCP6)</name>
    <dbReference type="NCBI Taxonomy" id="216895"/>
    <lineage>
        <taxon>Bacteria</taxon>
        <taxon>Pseudomonadati</taxon>
        <taxon>Pseudomonadota</taxon>
        <taxon>Gammaproteobacteria</taxon>
        <taxon>Vibrionales</taxon>
        <taxon>Vibrionaceae</taxon>
        <taxon>Vibrio</taxon>
    </lineage>
</organism>
<keyword id="KW-0342">GTP-binding</keyword>
<keyword id="KW-0547">Nucleotide-binding</keyword>
<keyword id="KW-0677">Repeat</keyword>
<keyword id="KW-0690">Ribosome biogenesis</keyword>
<accession>Q8DF02</accession>
<dbReference type="EMBL" id="AE016795">
    <property type="protein sequence ID" value="AAO08946.1"/>
    <property type="molecule type" value="Genomic_DNA"/>
</dbReference>
<dbReference type="RefSeq" id="WP_011078522.1">
    <property type="nucleotide sequence ID" value="NC_004459.3"/>
</dbReference>
<dbReference type="SMR" id="Q8DF02"/>
<dbReference type="KEGG" id="vvu:VV1_0423"/>
<dbReference type="HOGENOM" id="CLU_016077_5_0_6"/>
<dbReference type="Proteomes" id="UP000002275">
    <property type="component" value="Chromosome 1"/>
</dbReference>
<dbReference type="GO" id="GO:0016887">
    <property type="term" value="F:ATP hydrolysis activity"/>
    <property type="evidence" value="ECO:0007669"/>
    <property type="project" value="InterPro"/>
</dbReference>
<dbReference type="GO" id="GO:0005525">
    <property type="term" value="F:GTP binding"/>
    <property type="evidence" value="ECO:0007669"/>
    <property type="project" value="UniProtKB-UniRule"/>
</dbReference>
<dbReference type="GO" id="GO:0043022">
    <property type="term" value="F:ribosome binding"/>
    <property type="evidence" value="ECO:0007669"/>
    <property type="project" value="TreeGrafter"/>
</dbReference>
<dbReference type="GO" id="GO:0042254">
    <property type="term" value="P:ribosome biogenesis"/>
    <property type="evidence" value="ECO:0007669"/>
    <property type="project" value="UniProtKB-KW"/>
</dbReference>
<dbReference type="CDD" id="cd01894">
    <property type="entry name" value="EngA1"/>
    <property type="match status" value="1"/>
</dbReference>
<dbReference type="CDD" id="cd01895">
    <property type="entry name" value="EngA2"/>
    <property type="match status" value="1"/>
</dbReference>
<dbReference type="FunFam" id="3.30.300.20:FF:000004">
    <property type="entry name" value="GTPase Der"/>
    <property type="match status" value="1"/>
</dbReference>
<dbReference type="FunFam" id="3.40.50.300:FF:000040">
    <property type="entry name" value="GTPase Der"/>
    <property type="match status" value="1"/>
</dbReference>
<dbReference type="FunFam" id="3.40.50.300:FF:000057">
    <property type="entry name" value="GTPase Der"/>
    <property type="match status" value="1"/>
</dbReference>
<dbReference type="Gene3D" id="3.30.300.20">
    <property type="match status" value="1"/>
</dbReference>
<dbReference type="Gene3D" id="3.40.50.300">
    <property type="entry name" value="P-loop containing nucleotide triphosphate hydrolases"/>
    <property type="match status" value="2"/>
</dbReference>
<dbReference type="HAMAP" id="MF_00195">
    <property type="entry name" value="GTPase_Der"/>
    <property type="match status" value="1"/>
</dbReference>
<dbReference type="InterPro" id="IPR003593">
    <property type="entry name" value="AAA+_ATPase"/>
</dbReference>
<dbReference type="InterPro" id="IPR031166">
    <property type="entry name" value="G_ENGA"/>
</dbReference>
<dbReference type="InterPro" id="IPR006073">
    <property type="entry name" value="GTP-bd"/>
</dbReference>
<dbReference type="InterPro" id="IPR016484">
    <property type="entry name" value="GTPase_Der"/>
</dbReference>
<dbReference type="InterPro" id="IPR032859">
    <property type="entry name" value="KH_dom-like"/>
</dbReference>
<dbReference type="InterPro" id="IPR015946">
    <property type="entry name" value="KH_dom-like_a/b"/>
</dbReference>
<dbReference type="InterPro" id="IPR027417">
    <property type="entry name" value="P-loop_NTPase"/>
</dbReference>
<dbReference type="InterPro" id="IPR005225">
    <property type="entry name" value="Small_GTP-bd"/>
</dbReference>
<dbReference type="NCBIfam" id="TIGR03594">
    <property type="entry name" value="GTPase_EngA"/>
    <property type="match status" value="1"/>
</dbReference>
<dbReference type="NCBIfam" id="TIGR00231">
    <property type="entry name" value="small_GTP"/>
    <property type="match status" value="2"/>
</dbReference>
<dbReference type="PANTHER" id="PTHR43834">
    <property type="entry name" value="GTPASE DER"/>
    <property type="match status" value="1"/>
</dbReference>
<dbReference type="PANTHER" id="PTHR43834:SF6">
    <property type="entry name" value="GTPASE DER"/>
    <property type="match status" value="1"/>
</dbReference>
<dbReference type="Pfam" id="PF14714">
    <property type="entry name" value="KH_dom-like"/>
    <property type="match status" value="1"/>
</dbReference>
<dbReference type="Pfam" id="PF01926">
    <property type="entry name" value="MMR_HSR1"/>
    <property type="match status" value="2"/>
</dbReference>
<dbReference type="PIRSF" id="PIRSF006485">
    <property type="entry name" value="GTP-binding_EngA"/>
    <property type="match status" value="1"/>
</dbReference>
<dbReference type="PRINTS" id="PR00326">
    <property type="entry name" value="GTP1OBG"/>
</dbReference>
<dbReference type="SMART" id="SM00382">
    <property type="entry name" value="AAA"/>
    <property type="match status" value="2"/>
</dbReference>
<dbReference type="SMART" id="SM00173">
    <property type="entry name" value="RAS"/>
    <property type="match status" value="1"/>
</dbReference>
<dbReference type="SUPFAM" id="SSF52540">
    <property type="entry name" value="P-loop containing nucleoside triphosphate hydrolases"/>
    <property type="match status" value="2"/>
</dbReference>
<dbReference type="PROSITE" id="PS51712">
    <property type="entry name" value="G_ENGA"/>
    <property type="match status" value="2"/>
</dbReference>
<evidence type="ECO:0000255" key="1">
    <source>
        <dbReference type="HAMAP-Rule" id="MF_00195"/>
    </source>
</evidence>
<protein>
    <recommendedName>
        <fullName evidence="1">GTPase Der</fullName>
    </recommendedName>
    <alternativeName>
        <fullName evidence="1">GTP-binding protein EngA</fullName>
    </alternativeName>
</protein>
<proteinExistence type="inferred from homology"/>
<gene>
    <name evidence="1" type="primary">der</name>
    <name type="synonym">engA</name>
    <name type="ordered locus">VV1_0423</name>
</gene>
<sequence>MIPVVALVGRPNVGKSTLFNRLTRSRDALVADFPGLTRDRKYGQAKVGEHDFIVIDTGGIDGSEEGVETKMAEQSLAAIREADVVLFMVDGRAGLTPSDEAIAAHLRKIEKATMLVVNKVDGIDADAASADFWQLGVDEMYQIAAAHGRGVTALIERALDPFFDNLLSANNEGEIEDLTDMEDEDAEQQEYSEEDAEESLKRLQDQPIKLAIIGRPNVGKSTLTNRILGEERVVVYDMPGTTRDSIYIPMERDGREYVLIDTAGVRRRGKVHETVEKFSVVKTLKAVEDANVVLLVIDARENISDQDLSLLGFALNAGRSIVLAVNKWDGLDNEVKENVKKELDRRLGFVDFARIHFISALHGTGVGHLFESVQEAYRSATTRVGTSVLTRIMKMATEDHQPPMVRGRRVKLKYAHAGGYNPPIVVIHGNQVRELPDSYKRYLMNYFRKSLDIMGTPIRIQFQNSDNPFENRVNKMTLSQERARKRMMSAVKNRKK</sequence>